<protein>
    <recommendedName>
        <fullName evidence="1">Argininosuccinate lyase</fullName>
        <shortName evidence="1">ASAL</shortName>
        <ecNumber evidence="1">4.3.2.1</ecNumber>
    </recommendedName>
    <alternativeName>
        <fullName evidence="1">Arginosuccinase</fullName>
    </alternativeName>
</protein>
<name>ARLY_GEOSW</name>
<proteinExistence type="inferred from homology"/>
<sequence>MKKLWGGRFKKTAEEWVDEFGASIPFDQELVEEDIEGSIAHATMLGKCGILPSEDVEKIKAGLFTLLEKAKQGKLEFSVAYEDIHLNIEKMLIDEIGPVGGKLHTGRSRNDQVATDMHLYLRKRVTEIIALIQELQKVLVEKAEEHVETIVPGYTHLQRAQPISFAHHLLAYFWMLERDRERFRESLKRINKSPLGAGALAGTTFPIDRHLTAELLGFDGIYENSIDAVSDRDFIIEFLSNSSMLMMHLSRFCEELILWSSQEFQFIEIDDAFATGSSIMPQKKNPDMAELIRGKTGRVYGNLLALLTVMKGTPLAYNKDMQEDKEGMFDTVKTVTGSLKIFAGMIKTMKVNVDVMEKATKQDFSNATELADYLANKGVPFREAHEIVGKLVLICIEKGVFLADLPLDVYKEASPLFEEDIYEALKPYTAVNRRNSAGGTGFSEVRKALEKAKKIVNTP</sequence>
<dbReference type="EC" id="4.3.2.1" evidence="1"/>
<dbReference type="EMBL" id="CP001638">
    <property type="protein sequence ID" value="ACS25394.1"/>
    <property type="molecule type" value="Genomic_DNA"/>
</dbReference>
<dbReference type="SMR" id="C5D678"/>
<dbReference type="STRING" id="471223.GWCH70_2702"/>
<dbReference type="KEGG" id="gwc:GWCH70_2702"/>
<dbReference type="eggNOG" id="COG0165">
    <property type="taxonomic scope" value="Bacteria"/>
</dbReference>
<dbReference type="HOGENOM" id="CLU_027272_2_3_9"/>
<dbReference type="OrthoDB" id="9769623at2"/>
<dbReference type="UniPathway" id="UPA00068">
    <property type="reaction ID" value="UER00114"/>
</dbReference>
<dbReference type="GO" id="GO:0005829">
    <property type="term" value="C:cytosol"/>
    <property type="evidence" value="ECO:0007669"/>
    <property type="project" value="TreeGrafter"/>
</dbReference>
<dbReference type="GO" id="GO:0004056">
    <property type="term" value="F:argininosuccinate lyase activity"/>
    <property type="evidence" value="ECO:0007669"/>
    <property type="project" value="UniProtKB-UniRule"/>
</dbReference>
<dbReference type="GO" id="GO:0042450">
    <property type="term" value="P:arginine biosynthetic process via ornithine"/>
    <property type="evidence" value="ECO:0007669"/>
    <property type="project" value="InterPro"/>
</dbReference>
<dbReference type="GO" id="GO:0006526">
    <property type="term" value="P:L-arginine biosynthetic process"/>
    <property type="evidence" value="ECO:0007669"/>
    <property type="project" value="UniProtKB-UniRule"/>
</dbReference>
<dbReference type="CDD" id="cd01359">
    <property type="entry name" value="Argininosuccinate_lyase"/>
    <property type="match status" value="1"/>
</dbReference>
<dbReference type="FunFam" id="1.10.275.10:FF:000002">
    <property type="entry name" value="Argininosuccinate lyase"/>
    <property type="match status" value="1"/>
</dbReference>
<dbReference type="FunFam" id="1.10.40.30:FF:000001">
    <property type="entry name" value="Argininosuccinate lyase"/>
    <property type="match status" value="1"/>
</dbReference>
<dbReference type="FunFam" id="1.20.200.10:FF:000002">
    <property type="entry name" value="Argininosuccinate lyase"/>
    <property type="match status" value="1"/>
</dbReference>
<dbReference type="Gene3D" id="1.10.40.30">
    <property type="entry name" value="Fumarase/aspartase (C-terminal domain)"/>
    <property type="match status" value="1"/>
</dbReference>
<dbReference type="Gene3D" id="1.20.200.10">
    <property type="entry name" value="Fumarase/aspartase (Central domain)"/>
    <property type="match status" value="1"/>
</dbReference>
<dbReference type="Gene3D" id="1.10.275.10">
    <property type="entry name" value="Fumarase/aspartase (N-terminal domain)"/>
    <property type="match status" value="1"/>
</dbReference>
<dbReference type="HAMAP" id="MF_00006">
    <property type="entry name" value="Arg_succ_lyase"/>
    <property type="match status" value="1"/>
</dbReference>
<dbReference type="InterPro" id="IPR029419">
    <property type="entry name" value="Arg_succ_lyase_C"/>
</dbReference>
<dbReference type="InterPro" id="IPR009049">
    <property type="entry name" value="Argininosuccinate_lyase"/>
</dbReference>
<dbReference type="InterPro" id="IPR024083">
    <property type="entry name" value="Fumarase/histidase_N"/>
</dbReference>
<dbReference type="InterPro" id="IPR020557">
    <property type="entry name" value="Fumarate_lyase_CS"/>
</dbReference>
<dbReference type="InterPro" id="IPR000362">
    <property type="entry name" value="Fumarate_lyase_fam"/>
</dbReference>
<dbReference type="InterPro" id="IPR022761">
    <property type="entry name" value="Fumarate_lyase_N"/>
</dbReference>
<dbReference type="InterPro" id="IPR008948">
    <property type="entry name" value="L-Aspartase-like"/>
</dbReference>
<dbReference type="NCBIfam" id="TIGR00838">
    <property type="entry name" value="argH"/>
    <property type="match status" value="1"/>
</dbReference>
<dbReference type="PANTHER" id="PTHR43814">
    <property type="entry name" value="ARGININOSUCCINATE LYASE"/>
    <property type="match status" value="1"/>
</dbReference>
<dbReference type="PANTHER" id="PTHR43814:SF1">
    <property type="entry name" value="ARGININOSUCCINATE LYASE"/>
    <property type="match status" value="1"/>
</dbReference>
<dbReference type="Pfam" id="PF14698">
    <property type="entry name" value="ASL_C2"/>
    <property type="match status" value="1"/>
</dbReference>
<dbReference type="Pfam" id="PF00206">
    <property type="entry name" value="Lyase_1"/>
    <property type="match status" value="1"/>
</dbReference>
<dbReference type="PRINTS" id="PR00145">
    <property type="entry name" value="ARGSUCLYASE"/>
</dbReference>
<dbReference type="PRINTS" id="PR00149">
    <property type="entry name" value="FUMRATELYASE"/>
</dbReference>
<dbReference type="SUPFAM" id="SSF48557">
    <property type="entry name" value="L-aspartase-like"/>
    <property type="match status" value="1"/>
</dbReference>
<dbReference type="PROSITE" id="PS00163">
    <property type="entry name" value="FUMARATE_LYASES"/>
    <property type="match status" value="1"/>
</dbReference>
<organism>
    <name type="scientific">Geobacillus sp. (strain WCH70)</name>
    <dbReference type="NCBI Taxonomy" id="471223"/>
    <lineage>
        <taxon>Bacteria</taxon>
        <taxon>Bacillati</taxon>
        <taxon>Bacillota</taxon>
        <taxon>Bacilli</taxon>
        <taxon>Bacillales</taxon>
        <taxon>Anoxybacillaceae</taxon>
        <taxon>Geobacillus</taxon>
    </lineage>
</organism>
<keyword id="KW-0028">Amino-acid biosynthesis</keyword>
<keyword id="KW-0055">Arginine biosynthesis</keyword>
<keyword id="KW-0963">Cytoplasm</keyword>
<keyword id="KW-0456">Lyase</keyword>
<accession>C5D678</accession>
<evidence type="ECO:0000255" key="1">
    <source>
        <dbReference type="HAMAP-Rule" id="MF_00006"/>
    </source>
</evidence>
<gene>
    <name evidence="1" type="primary">argH</name>
    <name type="ordered locus">GWCH70_2702</name>
</gene>
<comment type="catalytic activity">
    <reaction evidence="1">
        <text>2-(N(omega)-L-arginino)succinate = fumarate + L-arginine</text>
        <dbReference type="Rhea" id="RHEA:24020"/>
        <dbReference type="ChEBI" id="CHEBI:29806"/>
        <dbReference type="ChEBI" id="CHEBI:32682"/>
        <dbReference type="ChEBI" id="CHEBI:57472"/>
        <dbReference type="EC" id="4.3.2.1"/>
    </reaction>
</comment>
<comment type="pathway">
    <text evidence="1">Amino-acid biosynthesis; L-arginine biosynthesis; L-arginine from L-ornithine and carbamoyl phosphate: step 3/3.</text>
</comment>
<comment type="subcellular location">
    <subcellularLocation>
        <location evidence="1">Cytoplasm</location>
    </subcellularLocation>
</comment>
<comment type="similarity">
    <text evidence="1">Belongs to the lyase 1 family. Argininosuccinate lyase subfamily.</text>
</comment>
<feature type="chain" id="PRO_1000201701" description="Argininosuccinate lyase">
    <location>
        <begin position="1"/>
        <end position="459"/>
    </location>
</feature>
<reference key="1">
    <citation type="submission" date="2009-06" db="EMBL/GenBank/DDBJ databases">
        <title>Complete sequence of chromosome of Geopacillus sp. WCH70.</title>
        <authorList>
            <consortium name="US DOE Joint Genome Institute"/>
            <person name="Lucas S."/>
            <person name="Copeland A."/>
            <person name="Lapidus A."/>
            <person name="Glavina del Rio T."/>
            <person name="Dalin E."/>
            <person name="Tice H."/>
            <person name="Bruce D."/>
            <person name="Goodwin L."/>
            <person name="Pitluck S."/>
            <person name="Chertkov O."/>
            <person name="Brettin T."/>
            <person name="Detter J.C."/>
            <person name="Han C."/>
            <person name="Larimer F."/>
            <person name="Land M."/>
            <person name="Hauser L."/>
            <person name="Kyrpides N."/>
            <person name="Mikhailova N."/>
            <person name="Brumm P."/>
            <person name="Mead D.A."/>
            <person name="Richardson P."/>
        </authorList>
    </citation>
    <scope>NUCLEOTIDE SEQUENCE [LARGE SCALE GENOMIC DNA]</scope>
    <source>
        <strain>WCH70</strain>
    </source>
</reference>